<feature type="chain" id="PRO_0000263281" description="Peptide chain release factor 1">
    <location>
        <begin position="1"/>
        <end position="352"/>
    </location>
</feature>
<feature type="modified residue" description="N5-methylglutamine" evidence="1">
    <location>
        <position position="229"/>
    </location>
</feature>
<gene>
    <name evidence="1" type="primary">prfA</name>
    <name type="ordered locus">GbCGDNIH1_0606</name>
</gene>
<evidence type="ECO:0000255" key="1">
    <source>
        <dbReference type="HAMAP-Rule" id="MF_00093"/>
    </source>
</evidence>
<proteinExistence type="inferred from homology"/>
<organism>
    <name type="scientific">Granulibacter bethesdensis (strain ATCC BAA-1260 / CGDNIH1)</name>
    <dbReference type="NCBI Taxonomy" id="391165"/>
    <lineage>
        <taxon>Bacteria</taxon>
        <taxon>Pseudomonadati</taxon>
        <taxon>Pseudomonadota</taxon>
        <taxon>Alphaproteobacteria</taxon>
        <taxon>Acetobacterales</taxon>
        <taxon>Acetobacteraceae</taxon>
        <taxon>Granulibacter</taxon>
    </lineage>
</organism>
<name>RF1_GRABC</name>
<protein>
    <recommendedName>
        <fullName evidence="1">Peptide chain release factor 1</fullName>
        <shortName evidence="1">RF-1</shortName>
    </recommendedName>
</protein>
<keyword id="KW-0963">Cytoplasm</keyword>
<keyword id="KW-0488">Methylation</keyword>
<keyword id="KW-0648">Protein biosynthesis</keyword>
<keyword id="KW-1185">Reference proteome</keyword>
<comment type="function">
    <text evidence="1">Peptide chain release factor 1 directs the termination of translation in response to the peptide chain termination codons UAG and UAA.</text>
</comment>
<comment type="subcellular location">
    <subcellularLocation>
        <location evidence="1">Cytoplasm</location>
    </subcellularLocation>
</comment>
<comment type="PTM">
    <text evidence="1">Methylated by PrmC. Methylation increases the termination efficiency of RF1.</text>
</comment>
<comment type="similarity">
    <text evidence="1">Belongs to the prokaryotic/mitochondrial release factor family.</text>
</comment>
<accession>Q0BUJ8</accession>
<reference key="1">
    <citation type="journal article" date="2007" name="J. Bacteriol.">
        <title>Genome sequence analysis of the emerging human pathogenic acetic acid bacterium Granulibacter bethesdensis.</title>
        <authorList>
            <person name="Greenberg D.E."/>
            <person name="Porcella S.F."/>
            <person name="Zelazny A.M."/>
            <person name="Virtaneva K."/>
            <person name="Sturdevant D.E."/>
            <person name="Kupko J.J. III"/>
            <person name="Barbian K.D."/>
            <person name="Babar A."/>
            <person name="Dorward D.W."/>
            <person name="Holland S.M."/>
        </authorList>
    </citation>
    <scope>NUCLEOTIDE SEQUENCE [LARGE SCALE GENOMIC DNA]</scope>
    <source>
        <strain>ATCC BAA-1260 / CGDNIH1</strain>
    </source>
</reference>
<sequence length="352" mass="39011">MSFTANLDRIVARAEELRASLSEGLNGDSFAAASRELAELEPVVARIEELWAAERGLAEAEAMLADPDMRELAESEAEILREKLPSLTREIRIALLPKDEADERSAILEIRPAAGGDEASLFAAQLFSMYQRYAEIRGWRFEILEYDDTGLGGLKGGMAEITGRSVFARLKYESGVHRVQRVPATESQGRIHTSTVTVAVLPEAEDVDVQVDEGDLRIDVYRASGAGGQHVNKTESAVRITHLPSGIVVAMQEEKSQHKNRAKAMKILKARLYEQQRAALHASRAADRRAQVGTGDRSERIRTYNFPQGRVSDHRINLTLYKIDRVMLGELDDFVDALTAEDQAARLSAQEL</sequence>
<dbReference type="EMBL" id="CP000394">
    <property type="protein sequence ID" value="ABI61504.1"/>
    <property type="molecule type" value="Genomic_DNA"/>
</dbReference>
<dbReference type="RefSeq" id="WP_011631313.1">
    <property type="nucleotide sequence ID" value="NC_008343.2"/>
</dbReference>
<dbReference type="SMR" id="Q0BUJ8"/>
<dbReference type="STRING" id="391165.GbCGDNIH1_0606"/>
<dbReference type="GeneID" id="69744860"/>
<dbReference type="KEGG" id="gbe:GbCGDNIH1_0606"/>
<dbReference type="eggNOG" id="COG0216">
    <property type="taxonomic scope" value="Bacteria"/>
</dbReference>
<dbReference type="HOGENOM" id="CLU_036856_0_1_5"/>
<dbReference type="OrthoDB" id="9806673at2"/>
<dbReference type="Proteomes" id="UP000001963">
    <property type="component" value="Chromosome"/>
</dbReference>
<dbReference type="GO" id="GO:0005737">
    <property type="term" value="C:cytoplasm"/>
    <property type="evidence" value="ECO:0007669"/>
    <property type="project" value="UniProtKB-SubCell"/>
</dbReference>
<dbReference type="GO" id="GO:0016149">
    <property type="term" value="F:translation release factor activity, codon specific"/>
    <property type="evidence" value="ECO:0007669"/>
    <property type="project" value="UniProtKB-UniRule"/>
</dbReference>
<dbReference type="FunFam" id="3.30.160.20:FF:000004">
    <property type="entry name" value="Peptide chain release factor 1"/>
    <property type="match status" value="1"/>
</dbReference>
<dbReference type="FunFam" id="3.30.70.1660:FF:000002">
    <property type="entry name" value="Peptide chain release factor 1"/>
    <property type="match status" value="1"/>
</dbReference>
<dbReference type="FunFam" id="3.30.70.1660:FF:000004">
    <property type="entry name" value="Peptide chain release factor 1"/>
    <property type="match status" value="1"/>
</dbReference>
<dbReference type="Gene3D" id="3.30.160.20">
    <property type="match status" value="1"/>
</dbReference>
<dbReference type="Gene3D" id="3.30.70.1660">
    <property type="match status" value="1"/>
</dbReference>
<dbReference type="Gene3D" id="6.10.140.1950">
    <property type="match status" value="1"/>
</dbReference>
<dbReference type="HAMAP" id="MF_00093">
    <property type="entry name" value="Rel_fac_1"/>
    <property type="match status" value="1"/>
</dbReference>
<dbReference type="InterPro" id="IPR005139">
    <property type="entry name" value="PCRF"/>
</dbReference>
<dbReference type="InterPro" id="IPR000352">
    <property type="entry name" value="Pep_chain_release_fac_I"/>
</dbReference>
<dbReference type="InterPro" id="IPR045853">
    <property type="entry name" value="Pep_chain_release_fac_I_sf"/>
</dbReference>
<dbReference type="InterPro" id="IPR050057">
    <property type="entry name" value="Prokaryotic/Mito_RF"/>
</dbReference>
<dbReference type="InterPro" id="IPR004373">
    <property type="entry name" value="RF-1"/>
</dbReference>
<dbReference type="NCBIfam" id="TIGR00019">
    <property type="entry name" value="prfA"/>
    <property type="match status" value="1"/>
</dbReference>
<dbReference type="NCBIfam" id="NF001859">
    <property type="entry name" value="PRK00591.1"/>
    <property type="match status" value="1"/>
</dbReference>
<dbReference type="PANTHER" id="PTHR43804">
    <property type="entry name" value="LD18447P"/>
    <property type="match status" value="1"/>
</dbReference>
<dbReference type="PANTHER" id="PTHR43804:SF7">
    <property type="entry name" value="LD18447P"/>
    <property type="match status" value="1"/>
</dbReference>
<dbReference type="Pfam" id="PF03462">
    <property type="entry name" value="PCRF"/>
    <property type="match status" value="1"/>
</dbReference>
<dbReference type="Pfam" id="PF00472">
    <property type="entry name" value="RF-1"/>
    <property type="match status" value="1"/>
</dbReference>
<dbReference type="SMART" id="SM00937">
    <property type="entry name" value="PCRF"/>
    <property type="match status" value="1"/>
</dbReference>
<dbReference type="SUPFAM" id="SSF75620">
    <property type="entry name" value="Release factor"/>
    <property type="match status" value="1"/>
</dbReference>
<dbReference type="PROSITE" id="PS00745">
    <property type="entry name" value="RF_PROK_I"/>
    <property type="match status" value="1"/>
</dbReference>